<dbReference type="EC" id="2.3.1.191" evidence="1"/>
<dbReference type="EMBL" id="AE003852">
    <property type="protein sequence ID" value="AAF95394.1"/>
    <property type="molecule type" value="Genomic_DNA"/>
</dbReference>
<dbReference type="PIR" id="H82098">
    <property type="entry name" value="H82098"/>
</dbReference>
<dbReference type="RefSeq" id="NP_231881.1">
    <property type="nucleotide sequence ID" value="NC_002505.1"/>
</dbReference>
<dbReference type="RefSeq" id="WP_000210023.1">
    <property type="nucleotide sequence ID" value="NZ_LT906614.1"/>
</dbReference>
<dbReference type="SMR" id="Q9KPW2"/>
<dbReference type="STRING" id="243277.VC_2250"/>
<dbReference type="DNASU" id="2613172"/>
<dbReference type="EnsemblBacteria" id="AAF95394">
    <property type="protein sequence ID" value="AAF95394"/>
    <property type="gene ID" value="VC_2250"/>
</dbReference>
<dbReference type="KEGG" id="vch:VC_2250"/>
<dbReference type="PATRIC" id="fig|243277.26.peg.2146"/>
<dbReference type="eggNOG" id="COG1044">
    <property type="taxonomic scope" value="Bacteria"/>
</dbReference>
<dbReference type="HOGENOM" id="CLU_049865_0_1_6"/>
<dbReference type="BioCyc" id="MetaCyc:FY484_RS11245-MONOMER"/>
<dbReference type="UniPathway" id="UPA00973"/>
<dbReference type="Proteomes" id="UP000000584">
    <property type="component" value="Chromosome 1"/>
</dbReference>
<dbReference type="GO" id="GO:0016020">
    <property type="term" value="C:membrane"/>
    <property type="evidence" value="ECO:0007669"/>
    <property type="project" value="GOC"/>
</dbReference>
<dbReference type="GO" id="GO:0016410">
    <property type="term" value="F:N-acyltransferase activity"/>
    <property type="evidence" value="ECO:0007669"/>
    <property type="project" value="InterPro"/>
</dbReference>
<dbReference type="GO" id="GO:0009245">
    <property type="term" value="P:lipid A biosynthetic process"/>
    <property type="evidence" value="ECO:0007669"/>
    <property type="project" value="UniProtKB-UniRule"/>
</dbReference>
<dbReference type="CDD" id="cd03352">
    <property type="entry name" value="LbH_LpxD"/>
    <property type="match status" value="1"/>
</dbReference>
<dbReference type="FunFam" id="2.160.10.10:FF:000005">
    <property type="entry name" value="UDP-3-O-(3-hydroxymyristoyl)glucosamine N-acyltransferase"/>
    <property type="match status" value="1"/>
</dbReference>
<dbReference type="Gene3D" id="1.20.5.170">
    <property type="match status" value="1"/>
</dbReference>
<dbReference type="Gene3D" id="2.160.10.10">
    <property type="entry name" value="Hexapeptide repeat proteins"/>
    <property type="match status" value="1"/>
</dbReference>
<dbReference type="Gene3D" id="3.40.1390.10">
    <property type="entry name" value="MurE/MurF, N-terminal domain"/>
    <property type="match status" value="1"/>
</dbReference>
<dbReference type="HAMAP" id="MF_00523">
    <property type="entry name" value="LpxD"/>
    <property type="match status" value="1"/>
</dbReference>
<dbReference type="InterPro" id="IPR001451">
    <property type="entry name" value="Hexapep"/>
</dbReference>
<dbReference type="InterPro" id="IPR018357">
    <property type="entry name" value="Hexapep_transf_CS"/>
</dbReference>
<dbReference type="InterPro" id="IPR007691">
    <property type="entry name" value="LpxD"/>
</dbReference>
<dbReference type="InterPro" id="IPR011004">
    <property type="entry name" value="Trimer_LpxA-like_sf"/>
</dbReference>
<dbReference type="InterPro" id="IPR020573">
    <property type="entry name" value="UDP_GlcNAc_AcTrfase_non-rep"/>
</dbReference>
<dbReference type="NCBIfam" id="TIGR01853">
    <property type="entry name" value="lipid_A_lpxD"/>
    <property type="match status" value="1"/>
</dbReference>
<dbReference type="NCBIfam" id="NF002060">
    <property type="entry name" value="PRK00892.1"/>
    <property type="match status" value="1"/>
</dbReference>
<dbReference type="PANTHER" id="PTHR43378">
    <property type="entry name" value="UDP-3-O-ACYLGLUCOSAMINE N-ACYLTRANSFERASE"/>
    <property type="match status" value="1"/>
</dbReference>
<dbReference type="PANTHER" id="PTHR43378:SF2">
    <property type="entry name" value="UDP-3-O-ACYLGLUCOSAMINE N-ACYLTRANSFERASE 1, MITOCHONDRIAL-RELATED"/>
    <property type="match status" value="1"/>
</dbReference>
<dbReference type="Pfam" id="PF00132">
    <property type="entry name" value="Hexapep"/>
    <property type="match status" value="2"/>
</dbReference>
<dbReference type="Pfam" id="PF04613">
    <property type="entry name" value="LpxD"/>
    <property type="match status" value="1"/>
</dbReference>
<dbReference type="SUPFAM" id="SSF51161">
    <property type="entry name" value="Trimeric LpxA-like enzymes"/>
    <property type="match status" value="1"/>
</dbReference>
<dbReference type="PROSITE" id="PS00101">
    <property type="entry name" value="HEXAPEP_TRANSFERASES"/>
    <property type="match status" value="3"/>
</dbReference>
<accession>Q9KPW2</accession>
<feature type="chain" id="PRO_0000059707" description="UDP-3-O-acylglucosamine N-acyltransferase">
    <location>
        <begin position="1"/>
        <end position="351"/>
    </location>
</feature>
<feature type="active site" description="Proton acceptor" evidence="1">
    <location>
        <position position="239"/>
    </location>
</feature>
<reference key="1">
    <citation type="journal article" date="2000" name="Nature">
        <title>DNA sequence of both chromosomes of the cholera pathogen Vibrio cholerae.</title>
        <authorList>
            <person name="Heidelberg J.F."/>
            <person name="Eisen J.A."/>
            <person name="Nelson W.C."/>
            <person name="Clayton R.A."/>
            <person name="Gwinn M.L."/>
            <person name="Dodson R.J."/>
            <person name="Haft D.H."/>
            <person name="Hickey E.K."/>
            <person name="Peterson J.D."/>
            <person name="Umayam L.A."/>
            <person name="Gill S.R."/>
            <person name="Nelson K.E."/>
            <person name="Read T.D."/>
            <person name="Tettelin H."/>
            <person name="Richardson D.L."/>
            <person name="Ermolaeva M.D."/>
            <person name="Vamathevan J.J."/>
            <person name="Bass S."/>
            <person name="Qin H."/>
            <person name="Dragoi I."/>
            <person name="Sellers P."/>
            <person name="McDonald L.A."/>
            <person name="Utterback T.R."/>
            <person name="Fleischmann R.D."/>
            <person name="Nierman W.C."/>
            <person name="White O."/>
            <person name="Salzberg S.L."/>
            <person name="Smith H.O."/>
            <person name="Colwell R.R."/>
            <person name="Mekalanos J.J."/>
            <person name="Venter J.C."/>
            <person name="Fraser C.M."/>
        </authorList>
    </citation>
    <scope>NUCLEOTIDE SEQUENCE [LARGE SCALE GENOMIC DNA]</scope>
    <source>
        <strain>ATCC 39315 / El Tor Inaba N16961</strain>
    </source>
</reference>
<evidence type="ECO:0000255" key="1">
    <source>
        <dbReference type="HAMAP-Rule" id="MF_00523"/>
    </source>
</evidence>
<name>LPXD_VIBCH</name>
<sequence>MTTLTLAELATITGGELFGDPTALVSAVAPMDKAQLGHVTFLSNPKYSKHLGDCKATVIMVKTSERELCPSNALVVADPYVAFAKVAQALDSTPSPAHGIAPSAVIAEDAKLGHNVSIGANAVIESGVQLGDNVVIGAGCFIGKQARLGDNTKLWANVTIYHKVEIGSDCLIQSGTVIGADGFGYANERGEWIKIPQLGSVRIGDRVEIGACTTIDRGALDDTVIEDNVIIDNQLQIAHNVHIGYGSALAGGTVIAGSTRIGKYCIIGGASVINGHIEIADGVTITGMGMVMRSIEEKGMYSSGIPLQTNKEWRKTAARVHRIDDMHKRLKALEKLLEQSDTVQPDNSQAE</sequence>
<organism>
    <name type="scientific">Vibrio cholerae serotype O1 (strain ATCC 39315 / El Tor Inaba N16961)</name>
    <dbReference type="NCBI Taxonomy" id="243277"/>
    <lineage>
        <taxon>Bacteria</taxon>
        <taxon>Pseudomonadati</taxon>
        <taxon>Pseudomonadota</taxon>
        <taxon>Gammaproteobacteria</taxon>
        <taxon>Vibrionales</taxon>
        <taxon>Vibrionaceae</taxon>
        <taxon>Vibrio</taxon>
    </lineage>
</organism>
<gene>
    <name evidence="1" type="primary">lpxD</name>
    <name type="ordered locus">VC_2250</name>
</gene>
<protein>
    <recommendedName>
        <fullName evidence="1">UDP-3-O-acylglucosamine N-acyltransferase</fullName>
        <ecNumber evidence="1">2.3.1.191</ecNumber>
    </recommendedName>
</protein>
<keyword id="KW-0012">Acyltransferase</keyword>
<keyword id="KW-0441">Lipid A biosynthesis</keyword>
<keyword id="KW-0444">Lipid biosynthesis</keyword>
<keyword id="KW-0443">Lipid metabolism</keyword>
<keyword id="KW-1185">Reference proteome</keyword>
<keyword id="KW-0677">Repeat</keyword>
<keyword id="KW-0808">Transferase</keyword>
<comment type="function">
    <text evidence="1">Catalyzes the N-acylation of UDP-3-O-acylglucosamine using 3-hydroxyacyl-ACP as the acyl donor. Is involved in the biosynthesis of lipid A, a phosphorylated glycolipid that anchors the lipopolysaccharide to the outer membrane of the cell.</text>
</comment>
<comment type="catalytic activity">
    <reaction evidence="1">
        <text>a UDP-3-O-[(3R)-3-hydroxyacyl]-alpha-D-glucosamine + a (3R)-hydroxyacyl-[ACP] = a UDP-2-N,3-O-bis[(3R)-3-hydroxyacyl]-alpha-D-glucosamine + holo-[ACP] + H(+)</text>
        <dbReference type="Rhea" id="RHEA:53836"/>
        <dbReference type="Rhea" id="RHEA-COMP:9685"/>
        <dbReference type="Rhea" id="RHEA-COMP:9945"/>
        <dbReference type="ChEBI" id="CHEBI:15378"/>
        <dbReference type="ChEBI" id="CHEBI:64479"/>
        <dbReference type="ChEBI" id="CHEBI:78827"/>
        <dbReference type="ChEBI" id="CHEBI:137740"/>
        <dbReference type="ChEBI" id="CHEBI:137748"/>
        <dbReference type="EC" id="2.3.1.191"/>
    </reaction>
</comment>
<comment type="pathway">
    <text evidence="1">Bacterial outer membrane biogenesis; LPS lipid A biosynthesis.</text>
</comment>
<comment type="subunit">
    <text evidence="1">Homotrimer.</text>
</comment>
<comment type="similarity">
    <text evidence="1">Belongs to the transferase hexapeptide repeat family. LpxD subfamily.</text>
</comment>
<proteinExistence type="inferred from homology"/>